<evidence type="ECO:0000255" key="1">
    <source>
        <dbReference type="HAMAP-Rule" id="MF_00808"/>
    </source>
</evidence>
<feature type="chain" id="PRO_0000217949" description="Photosystem II reaction center protein T">
    <location>
        <begin position="1"/>
        <end position="33"/>
    </location>
</feature>
<feature type="transmembrane region" description="Helical" evidence="1">
    <location>
        <begin position="3"/>
        <end position="23"/>
    </location>
</feature>
<accession>Q67HT9</accession>
<organism>
    <name type="scientific">Maianthemum racemosum</name>
    <name type="common">False Solomon's-seal</name>
    <name type="synonym">Smilacina racemosa</name>
    <dbReference type="NCBI Taxonomy" id="39530"/>
    <lineage>
        <taxon>Eukaryota</taxon>
        <taxon>Viridiplantae</taxon>
        <taxon>Streptophyta</taxon>
        <taxon>Embryophyta</taxon>
        <taxon>Tracheophyta</taxon>
        <taxon>Spermatophyta</taxon>
        <taxon>Magnoliopsida</taxon>
        <taxon>Liliopsida</taxon>
        <taxon>Asparagales</taxon>
        <taxon>Asparagaceae</taxon>
        <taxon>Nolinoideae</taxon>
        <taxon>Maianthemum</taxon>
    </lineage>
</organism>
<geneLocation type="chloroplast"/>
<keyword id="KW-0150">Chloroplast</keyword>
<keyword id="KW-0472">Membrane</keyword>
<keyword id="KW-0602">Photosynthesis</keyword>
<keyword id="KW-0604">Photosystem II</keyword>
<keyword id="KW-0934">Plastid</keyword>
<keyword id="KW-0793">Thylakoid</keyword>
<keyword id="KW-0812">Transmembrane</keyword>
<keyword id="KW-1133">Transmembrane helix</keyword>
<proteinExistence type="inferred from homology"/>
<comment type="function">
    <text evidence="1">Found at the monomer-monomer interface of the photosystem II (PS II) dimer, plays a role in assembly and dimerization of PSII. PSII is a light-driven water plastoquinone oxidoreductase, using light energy to abstract electrons from H(2)O, generating a proton gradient subsequently used for ATP formation.</text>
</comment>
<comment type="subunit">
    <text evidence="1">PSII is composed of 1 copy each of membrane proteins PsbA, PsbB, PsbC, PsbD, PsbE, PsbF, PsbH, PsbI, PsbJ, PsbK, PsbL, PsbM, PsbT, PsbY, PsbZ, Psb30/Ycf12, at least 3 peripheral proteins of the oxygen-evolving complex and a large number of cofactors. It forms dimeric complexes.</text>
</comment>
<comment type="subcellular location">
    <subcellularLocation>
        <location evidence="1">Plastid</location>
        <location evidence="1">Chloroplast thylakoid membrane</location>
        <topology evidence="1">Single-pass membrane protein</topology>
    </subcellularLocation>
</comment>
<comment type="similarity">
    <text evidence="1">Belongs to the PsbT family.</text>
</comment>
<dbReference type="EMBL" id="AY147541">
    <property type="protein sequence ID" value="AAN32265.1"/>
    <property type="molecule type" value="Genomic_DNA"/>
</dbReference>
<dbReference type="SMR" id="Q67HT9"/>
<dbReference type="GO" id="GO:0009535">
    <property type="term" value="C:chloroplast thylakoid membrane"/>
    <property type="evidence" value="ECO:0007669"/>
    <property type="project" value="UniProtKB-SubCell"/>
</dbReference>
<dbReference type="GO" id="GO:0009539">
    <property type="term" value="C:photosystem II reaction center"/>
    <property type="evidence" value="ECO:0007669"/>
    <property type="project" value="InterPro"/>
</dbReference>
<dbReference type="GO" id="GO:0015979">
    <property type="term" value="P:photosynthesis"/>
    <property type="evidence" value="ECO:0007669"/>
    <property type="project" value="UniProtKB-UniRule"/>
</dbReference>
<dbReference type="HAMAP" id="MF_00808">
    <property type="entry name" value="PSII_PsbT"/>
    <property type="match status" value="1"/>
</dbReference>
<dbReference type="InterPro" id="IPR001743">
    <property type="entry name" value="PSII_PsbT"/>
</dbReference>
<dbReference type="InterPro" id="IPR037268">
    <property type="entry name" value="PSII_PsbT_sf"/>
</dbReference>
<dbReference type="PANTHER" id="PTHR36411">
    <property type="match status" value="1"/>
</dbReference>
<dbReference type="PANTHER" id="PTHR36411:SF2">
    <property type="entry name" value="PHOTOSYSTEM II REACTION CENTER PROTEIN T"/>
    <property type="match status" value="1"/>
</dbReference>
<dbReference type="Pfam" id="PF01405">
    <property type="entry name" value="PsbT"/>
    <property type="match status" value="1"/>
</dbReference>
<dbReference type="SUPFAM" id="SSF161029">
    <property type="entry name" value="Photosystem II reaction center protein T, PsbT"/>
    <property type="match status" value="1"/>
</dbReference>
<protein>
    <recommendedName>
        <fullName evidence="1">Photosystem II reaction center protein T</fullName>
        <shortName evidence="1">PSII-T</shortName>
    </recommendedName>
</protein>
<reference key="1">
    <citation type="submission" date="2002-09" db="EMBL/GenBank/DDBJ databases">
        <title>Phylogenetic relationships among the major lineages of Asparagales based on a large chloroplast data set.</title>
        <authorList>
            <person name="McPherson M.A."/>
            <person name="Rai H.S."/>
            <person name="Wong W.A."/>
            <person name="Graham S.W."/>
        </authorList>
    </citation>
    <scope>NUCLEOTIDE SEQUENCE [GENOMIC DNA]</scope>
</reference>
<sequence>MEALVYTFLLVSTLGIIFFAIFFREPPKVPTKK</sequence>
<name>PSBT_MAIRA</name>
<gene>
    <name evidence="1" type="primary">psbT</name>
</gene>